<dbReference type="EC" id="2.7.7.77" evidence="1"/>
<dbReference type="EMBL" id="AM421808">
    <property type="protein sequence ID" value="CAM10398.1"/>
    <property type="molecule type" value="Genomic_DNA"/>
</dbReference>
<dbReference type="SMR" id="A1KU57"/>
<dbReference type="KEGG" id="nmc:NMC1149"/>
<dbReference type="HOGENOM" id="CLU_055597_5_1_4"/>
<dbReference type="Proteomes" id="UP000002286">
    <property type="component" value="Chromosome"/>
</dbReference>
<dbReference type="GO" id="GO:0005737">
    <property type="term" value="C:cytoplasm"/>
    <property type="evidence" value="ECO:0007669"/>
    <property type="project" value="UniProtKB-SubCell"/>
</dbReference>
<dbReference type="GO" id="GO:0005525">
    <property type="term" value="F:GTP binding"/>
    <property type="evidence" value="ECO:0007669"/>
    <property type="project" value="UniProtKB-UniRule"/>
</dbReference>
<dbReference type="GO" id="GO:0046872">
    <property type="term" value="F:metal ion binding"/>
    <property type="evidence" value="ECO:0007669"/>
    <property type="project" value="UniProtKB-KW"/>
</dbReference>
<dbReference type="GO" id="GO:0061603">
    <property type="term" value="F:molybdenum cofactor guanylyltransferase activity"/>
    <property type="evidence" value="ECO:0007669"/>
    <property type="project" value="UniProtKB-EC"/>
</dbReference>
<dbReference type="GO" id="GO:1902758">
    <property type="term" value="P:bis(molybdopterin guanine dinucleotide)molybdenum biosynthetic process"/>
    <property type="evidence" value="ECO:0007669"/>
    <property type="project" value="TreeGrafter"/>
</dbReference>
<dbReference type="CDD" id="cd02503">
    <property type="entry name" value="MobA"/>
    <property type="match status" value="1"/>
</dbReference>
<dbReference type="Gene3D" id="3.90.550.10">
    <property type="entry name" value="Spore Coat Polysaccharide Biosynthesis Protein SpsA, Chain A"/>
    <property type="match status" value="1"/>
</dbReference>
<dbReference type="HAMAP" id="MF_00316">
    <property type="entry name" value="MobA"/>
    <property type="match status" value="1"/>
</dbReference>
<dbReference type="InterPro" id="IPR025877">
    <property type="entry name" value="MobA-like_NTP_Trfase"/>
</dbReference>
<dbReference type="InterPro" id="IPR013482">
    <property type="entry name" value="Molybde_CF_guanTrfase"/>
</dbReference>
<dbReference type="InterPro" id="IPR029044">
    <property type="entry name" value="Nucleotide-diphossugar_trans"/>
</dbReference>
<dbReference type="PANTHER" id="PTHR19136">
    <property type="entry name" value="MOLYBDENUM COFACTOR GUANYLYLTRANSFERASE"/>
    <property type="match status" value="1"/>
</dbReference>
<dbReference type="PANTHER" id="PTHR19136:SF81">
    <property type="entry name" value="MOLYBDENUM COFACTOR GUANYLYLTRANSFERASE"/>
    <property type="match status" value="1"/>
</dbReference>
<dbReference type="Pfam" id="PF12804">
    <property type="entry name" value="NTP_transf_3"/>
    <property type="match status" value="1"/>
</dbReference>
<dbReference type="SUPFAM" id="SSF53448">
    <property type="entry name" value="Nucleotide-diphospho-sugar transferases"/>
    <property type="match status" value="1"/>
</dbReference>
<comment type="function">
    <text evidence="1">Transfers a GMP moiety from GTP to Mo-molybdopterin (Mo-MPT) cofactor (Moco or molybdenum cofactor) to form Mo-molybdopterin guanine dinucleotide (Mo-MGD) cofactor.</text>
</comment>
<comment type="catalytic activity">
    <reaction evidence="1">
        <text>Mo-molybdopterin + GTP + H(+) = Mo-molybdopterin guanine dinucleotide + diphosphate</text>
        <dbReference type="Rhea" id="RHEA:34243"/>
        <dbReference type="ChEBI" id="CHEBI:15378"/>
        <dbReference type="ChEBI" id="CHEBI:33019"/>
        <dbReference type="ChEBI" id="CHEBI:37565"/>
        <dbReference type="ChEBI" id="CHEBI:71302"/>
        <dbReference type="ChEBI" id="CHEBI:71310"/>
        <dbReference type="EC" id="2.7.7.77"/>
    </reaction>
</comment>
<comment type="cofactor">
    <cofactor evidence="1">
        <name>Mg(2+)</name>
        <dbReference type="ChEBI" id="CHEBI:18420"/>
    </cofactor>
</comment>
<comment type="subunit">
    <text evidence="1">Monomer.</text>
</comment>
<comment type="subcellular location">
    <subcellularLocation>
        <location evidence="1">Cytoplasm</location>
    </subcellularLocation>
</comment>
<comment type="domain">
    <text evidence="1">The N-terminal domain determines nucleotide recognition and specific binding, while the C-terminal domain determines the specific binding to the target protein.</text>
</comment>
<comment type="similarity">
    <text evidence="1">Belongs to the MobA family.</text>
</comment>
<keyword id="KW-0963">Cytoplasm</keyword>
<keyword id="KW-0342">GTP-binding</keyword>
<keyword id="KW-0460">Magnesium</keyword>
<keyword id="KW-0479">Metal-binding</keyword>
<keyword id="KW-0501">Molybdenum cofactor biosynthesis</keyword>
<keyword id="KW-0547">Nucleotide-binding</keyword>
<keyword id="KW-0808">Transferase</keyword>
<protein>
    <recommendedName>
        <fullName evidence="1">Molybdenum cofactor guanylyltransferase</fullName>
        <shortName evidence="1">MoCo guanylyltransferase</shortName>
        <ecNumber evidence="1">2.7.7.77</ecNumber>
    </recommendedName>
    <alternativeName>
        <fullName evidence="1">GTP:molybdopterin guanylyltransferase</fullName>
    </alternativeName>
    <alternativeName>
        <fullName evidence="1">Mo-MPT guanylyltransferase</fullName>
    </alternativeName>
    <alternativeName>
        <fullName evidence="1">Molybdopterin guanylyltransferase</fullName>
    </alternativeName>
    <alternativeName>
        <fullName evidence="1">Molybdopterin-guanine dinucleotide synthase</fullName>
        <shortName evidence="1">MGD synthase</shortName>
    </alternativeName>
</protein>
<accession>A1KU57</accession>
<reference key="1">
    <citation type="journal article" date="2007" name="PLoS Genet.">
        <title>Meningococcal genetic variation mechanisms viewed through comparative analysis of serogroup C strain FAM18.</title>
        <authorList>
            <person name="Bentley S.D."/>
            <person name="Vernikos G.S."/>
            <person name="Snyder L.A.S."/>
            <person name="Churcher C."/>
            <person name="Arrowsmith C."/>
            <person name="Chillingworth T."/>
            <person name="Cronin A."/>
            <person name="Davis P.H."/>
            <person name="Holroyd N.E."/>
            <person name="Jagels K."/>
            <person name="Maddison M."/>
            <person name="Moule S."/>
            <person name="Rabbinowitsch E."/>
            <person name="Sharp S."/>
            <person name="Unwin L."/>
            <person name="Whitehead S."/>
            <person name="Quail M.A."/>
            <person name="Achtman M."/>
            <person name="Barrell B.G."/>
            <person name="Saunders N.J."/>
            <person name="Parkhill J."/>
        </authorList>
    </citation>
    <scope>NUCLEOTIDE SEQUENCE [LARGE SCALE GENOMIC DNA]</scope>
    <source>
        <strain>ATCC 700532 / DSM 15464 / FAM18</strain>
    </source>
</reference>
<evidence type="ECO:0000255" key="1">
    <source>
        <dbReference type="HAMAP-Rule" id="MF_00316"/>
    </source>
</evidence>
<organism>
    <name type="scientific">Neisseria meningitidis serogroup C / serotype 2a (strain ATCC 700532 / DSM 15464 / FAM18)</name>
    <dbReference type="NCBI Taxonomy" id="272831"/>
    <lineage>
        <taxon>Bacteria</taxon>
        <taxon>Pseudomonadati</taxon>
        <taxon>Pseudomonadota</taxon>
        <taxon>Betaproteobacteria</taxon>
        <taxon>Neisseriales</taxon>
        <taxon>Neisseriaceae</taxon>
        <taxon>Neisseria</taxon>
    </lineage>
</organism>
<name>MOBA_NEIMF</name>
<proteinExistence type="inferred from homology"/>
<gene>
    <name evidence="1" type="primary">mobA</name>
    <name type="ordered locus">NMC1149</name>
</gene>
<sequence length="192" mass="21757">MKTFALILADGQASRMGGEDKGLALLGGKALIDHVIDRVRPQVSHIAISTNRNLEEYARRSPHIFPDARQWQHFGPLSALCTAANDLQLATADWLLVVPCDMPYLPGDLVARFETVSKRTPLCNAYYVETPITMHYNIMYIRPQILQSAIPYLFSGMKTLRSWLQQQRARPVRFEFDGHFADLNTQIDLQEG</sequence>
<feature type="chain" id="PRO_1000019128" description="Molybdenum cofactor guanylyltransferase">
    <location>
        <begin position="1"/>
        <end position="192"/>
    </location>
</feature>
<feature type="binding site" evidence="1">
    <location>
        <position position="21"/>
    </location>
    <ligand>
        <name>GTP</name>
        <dbReference type="ChEBI" id="CHEBI:37565"/>
    </ligand>
</feature>
<feature type="binding site" evidence="1">
    <location>
        <position position="67"/>
    </location>
    <ligand>
        <name>GTP</name>
        <dbReference type="ChEBI" id="CHEBI:37565"/>
    </ligand>
</feature>
<feature type="binding site" evidence="1">
    <location>
        <position position="101"/>
    </location>
    <ligand>
        <name>GTP</name>
        <dbReference type="ChEBI" id="CHEBI:37565"/>
    </ligand>
</feature>
<feature type="binding site" evidence="1">
    <location>
        <position position="101"/>
    </location>
    <ligand>
        <name>Mg(2+)</name>
        <dbReference type="ChEBI" id="CHEBI:18420"/>
    </ligand>
</feature>